<feature type="chain" id="PRO_0000245484" description="3-hydroxyanthranilate 3,4-dioxygenase">
    <location>
        <begin position="1"/>
        <end position="176"/>
    </location>
</feature>
<feature type="binding site" evidence="1">
    <location>
        <position position="44"/>
    </location>
    <ligand>
        <name>O2</name>
        <dbReference type="ChEBI" id="CHEBI:15379"/>
    </ligand>
</feature>
<feature type="binding site" evidence="1">
    <location>
        <position position="48"/>
    </location>
    <ligand>
        <name>Fe cation</name>
        <dbReference type="ChEBI" id="CHEBI:24875"/>
        <label>1</label>
        <note>catalytic</note>
    </ligand>
</feature>
<feature type="binding site" evidence="1">
    <location>
        <position position="54"/>
    </location>
    <ligand>
        <name>Fe cation</name>
        <dbReference type="ChEBI" id="CHEBI:24875"/>
        <label>1</label>
        <note>catalytic</note>
    </ligand>
</feature>
<feature type="binding site" evidence="1">
    <location>
        <position position="54"/>
    </location>
    <ligand>
        <name>substrate</name>
    </ligand>
</feature>
<feature type="binding site" evidence="1">
    <location>
        <position position="92"/>
    </location>
    <ligand>
        <name>Fe cation</name>
        <dbReference type="ChEBI" id="CHEBI:24875"/>
        <label>1</label>
        <note>catalytic</note>
    </ligand>
</feature>
<feature type="binding site" evidence="1">
    <location>
        <position position="96"/>
    </location>
    <ligand>
        <name>substrate</name>
    </ligand>
</feature>
<feature type="binding site" evidence="1">
    <location>
        <position position="106"/>
    </location>
    <ligand>
        <name>substrate</name>
    </ligand>
</feature>
<feature type="binding site" evidence="1">
    <location>
        <position position="121"/>
    </location>
    <ligand>
        <name>Fe cation</name>
        <dbReference type="ChEBI" id="CHEBI:24875"/>
        <label>2</label>
    </ligand>
</feature>
<feature type="binding site" evidence="1">
    <location>
        <position position="124"/>
    </location>
    <ligand>
        <name>Fe cation</name>
        <dbReference type="ChEBI" id="CHEBI:24875"/>
        <label>2</label>
    </ligand>
</feature>
<feature type="binding site" evidence="1">
    <location>
        <position position="158"/>
    </location>
    <ligand>
        <name>Fe cation</name>
        <dbReference type="ChEBI" id="CHEBI:24875"/>
        <label>2</label>
    </ligand>
</feature>
<feature type="binding site" evidence="1">
    <location>
        <position position="161"/>
    </location>
    <ligand>
        <name>Fe cation</name>
        <dbReference type="ChEBI" id="CHEBI:24875"/>
        <label>2</label>
    </ligand>
</feature>
<protein>
    <recommendedName>
        <fullName evidence="1">3-hydroxyanthranilate 3,4-dioxygenase</fullName>
        <ecNumber evidence="1">1.13.11.6</ecNumber>
    </recommendedName>
    <alternativeName>
        <fullName evidence="1">3-hydroxyanthranilate oxygenase</fullName>
        <shortName evidence="1">3-HAO</shortName>
    </alternativeName>
    <alternativeName>
        <fullName evidence="1">3-hydroxyanthranilic acid dioxygenase</fullName>
        <shortName evidence="1">HAD</shortName>
    </alternativeName>
</protein>
<organism>
    <name type="scientific">Xanthomonas oryzae pv. oryzae (strain KACC10331 / KXO85)</name>
    <dbReference type="NCBI Taxonomy" id="291331"/>
    <lineage>
        <taxon>Bacteria</taxon>
        <taxon>Pseudomonadati</taxon>
        <taxon>Pseudomonadota</taxon>
        <taxon>Gammaproteobacteria</taxon>
        <taxon>Lysobacterales</taxon>
        <taxon>Lysobacteraceae</taxon>
        <taxon>Xanthomonas</taxon>
    </lineage>
</organism>
<reference key="1">
    <citation type="journal article" date="2005" name="Nucleic Acids Res.">
        <title>The genome sequence of Xanthomonas oryzae pathovar oryzae KACC10331, the bacterial blight pathogen of rice.</title>
        <authorList>
            <person name="Lee B.-M."/>
            <person name="Park Y.-J."/>
            <person name="Park D.-S."/>
            <person name="Kang H.-W."/>
            <person name="Kim J.-G."/>
            <person name="Song E.-S."/>
            <person name="Park I.-C."/>
            <person name="Yoon U.-H."/>
            <person name="Hahn J.-H."/>
            <person name="Koo B.-S."/>
            <person name="Lee G.-B."/>
            <person name="Kim H."/>
            <person name="Park H.-S."/>
            <person name="Yoon K.-O."/>
            <person name="Kim J.-H."/>
            <person name="Jung C.-H."/>
            <person name="Koh N.-H."/>
            <person name="Seo J.-S."/>
            <person name="Go S.-J."/>
        </authorList>
    </citation>
    <scope>NUCLEOTIDE SEQUENCE [LARGE SCALE GENOMIC DNA]</scope>
    <source>
        <strain>KACC10331 / KXO85</strain>
    </source>
</reference>
<evidence type="ECO:0000255" key="1">
    <source>
        <dbReference type="HAMAP-Rule" id="MF_00825"/>
    </source>
</evidence>
<evidence type="ECO:0000305" key="2"/>
<keyword id="KW-0223">Dioxygenase</keyword>
<keyword id="KW-0408">Iron</keyword>
<keyword id="KW-0479">Metal-binding</keyword>
<keyword id="KW-0560">Oxidoreductase</keyword>
<keyword id="KW-0662">Pyridine nucleotide biosynthesis</keyword>
<keyword id="KW-1185">Reference proteome</keyword>
<accession>Q5H043</accession>
<gene>
    <name evidence="1" type="primary">nbaC</name>
    <name type="ordered locus">XOO2424</name>
</gene>
<sequence>MLIPPINLHAWIEEHRHLLKPPVGNKCIQQDGFIIMIVGGPNARTDYHYDEGPEWFFQLEGEMVLKVQDDGVARDIPIRAGEIFLLPPRVPHSPQRAAGSIGIVIERVRLPHEQDGLQWYCPQCNHKLYEAMFPLKNIETDFPPVFDHFYRSLALRTCSQCGHLHPAPERYAAVED</sequence>
<proteinExistence type="inferred from homology"/>
<dbReference type="EC" id="1.13.11.6" evidence="1"/>
<dbReference type="EMBL" id="AE013598">
    <property type="protein sequence ID" value="AAW75678.1"/>
    <property type="status" value="ALT_INIT"/>
    <property type="molecule type" value="Genomic_DNA"/>
</dbReference>
<dbReference type="SMR" id="Q5H043"/>
<dbReference type="STRING" id="291331.XOO2424"/>
<dbReference type="KEGG" id="xoo:XOO2424"/>
<dbReference type="HOGENOM" id="CLU_095765_0_0_6"/>
<dbReference type="UniPathway" id="UPA00253">
    <property type="reaction ID" value="UER00330"/>
</dbReference>
<dbReference type="Proteomes" id="UP000006735">
    <property type="component" value="Chromosome"/>
</dbReference>
<dbReference type="GO" id="GO:0000334">
    <property type="term" value="F:3-hydroxyanthranilate 3,4-dioxygenase activity"/>
    <property type="evidence" value="ECO:0007669"/>
    <property type="project" value="UniProtKB-UniRule"/>
</dbReference>
<dbReference type="GO" id="GO:0008198">
    <property type="term" value="F:ferrous iron binding"/>
    <property type="evidence" value="ECO:0007669"/>
    <property type="project" value="UniProtKB-UniRule"/>
</dbReference>
<dbReference type="GO" id="GO:0043420">
    <property type="term" value="P:anthranilate metabolic process"/>
    <property type="evidence" value="ECO:0007669"/>
    <property type="project" value="UniProtKB-UniRule"/>
</dbReference>
<dbReference type="GO" id="GO:0006569">
    <property type="term" value="P:L-tryptophan catabolic process"/>
    <property type="evidence" value="ECO:0007669"/>
    <property type="project" value="UniProtKB-UniRule"/>
</dbReference>
<dbReference type="GO" id="GO:0009435">
    <property type="term" value="P:NAD biosynthetic process"/>
    <property type="evidence" value="ECO:0007669"/>
    <property type="project" value="UniProtKB-UniPathway"/>
</dbReference>
<dbReference type="GO" id="GO:0019805">
    <property type="term" value="P:quinolinate biosynthetic process"/>
    <property type="evidence" value="ECO:0007669"/>
    <property type="project" value="UniProtKB-UniRule"/>
</dbReference>
<dbReference type="CDD" id="cd06123">
    <property type="entry name" value="cupin_HAO"/>
    <property type="match status" value="1"/>
</dbReference>
<dbReference type="Gene3D" id="2.60.120.10">
    <property type="entry name" value="Jelly Rolls"/>
    <property type="match status" value="1"/>
</dbReference>
<dbReference type="HAMAP" id="MF_00825">
    <property type="entry name" value="3_HAO"/>
    <property type="match status" value="1"/>
</dbReference>
<dbReference type="InterPro" id="IPR010329">
    <property type="entry name" value="3hydroanth_dOase"/>
</dbReference>
<dbReference type="InterPro" id="IPR014710">
    <property type="entry name" value="RmlC-like_jellyroll"/>
</dbReference>
<dbReference type="InterPro" id="IPR011051">
    <property type="entry name" value="RmlC_Cupin_sf"/>
</dbReference>
<dbReference type="NCBIfam" id="TIGR03037">
    <property type="entry name" value="anthran_nbaC"/>
    <property type="match status" value="1"/>
</dbReference>
<dbReference type="NCBIfam" id="NF009763">
    <property type="entry name" value="PRK13264.1"/>
    <property type="match status" value="1"/>
</dbReference>
<dbReference type="PANTHER" id="PTHR15497">
    <property type="entry name" value="3-HYDROXYANTHRANILATE 3,4-DIOXYGENASE"/>
    <property type="match status" value="1"/>
</dbReference>
<dbReference type="PANTHER" id="PTHR15497:SF1">
    <property type="entry name" value="3-HYDROXYANTHRANILATE 3,4-DIOXYGENASE"/>
    <property type="match status" value="1"/>
</dbReference>
<dbReference type="Pfam" id="PF06052">
    <property type="entry name" value="3-HAO"/>
    <property type="match status" value="1"/>
</dbReference>
<dbReference type="SUPFAM" id="SSF51182">
    <property type="entry name" value="RmlC-like cupins"/>
    <property type="match status" value="1"/>
</dbReference>
<name>3HAO_XANOR</name>
<comment type="function">
    <text evidence="1">Catalyzes the oxidative ring opening of 3-hydroxyanthranilate to 2-amino-3-carboxymuconate semialdehyde, which spontaneously cyclizes to quinolinate.</text>
</comment>
<comment type="catalytic activity">
    <reaction evidence="1">
        <text>3-hydroxyanthranilate + O2 = (2Z,4Z)-2-amino-3-carboxymuconate 6-semialdehyde</text>
        <dbReference type="Rhea" id="RHEA:17953"/>
        <dbReference type="ChEBI" id="CHEBI:15379"/>
        <dbReference type="ChEBI" id="CHEBI:36559"/>
        <dbReference type="ChEBI" id="CHEBI:77612"/>
        <dbReference type="EC" id="1.13.11.6"/>
    </reaction>
</comment>
<comment type="cofactor">
    <cofactor evidence="1">
        <name>Fe(2+)</name>
        <dbReference type="ChEBI" id="CHEBI:29033"/>
    </cofactor>
    <text evidence="1">Binds 2 Fe(2+) ions per subunit.</text>
</comment>
<comment type="pathway">
    <text evidence="1">Cofactor biosynthesis; NAD(+) biosynthesis; quinolinate from L-kynurenine: step 3/3.</text>
</comment>
<comment type="subunit">
    <text evidence="1">Homodimer.</text>
</comment>
<comment type="similarity">
    <text evidence="1">Belongs to the 3-HAO family.</text>
</comment>
<comment type="sequence caution" evidence="2">
    <conflict type="erroneous initiation">
        <sequence resource="EMBL-CDS" id="AAW75678"/>
    </conflict>
</comment>